<comment type="function">
    <text evidence="1">The electron transfer flavoprotein serves as a specific electron acceptor for several dehydrogenases, including five acyl-CoA dehydrogenases, glutaryl-CoA and sarcosine dehydrogenase. It transfers the electrons to the main mitochondrial respiratory chain via ETF-ubiquinone oxidoreductase (ETF dehydrogenase). Involved in leucine catabolism and in phytol degradation (By similarity).</text>
</comment>
<comment type="cofactor">
    <cofactor evidence="1">
        <name>FAD</name>
        <dbReference type="ChEBI" id="CHEBI:57692"/>
    </cofactor>
    <text evidence="1">Binds 1 FAD per dimer.</text>
</comment>
<comment type="subunit">
    <text>Heterodimer of an alpha and a beta subunit.</text>
</comment>
<comment type="subcellular location">
    <subcellularLocation>
        <location evidence="2 6">Mitochondrion matrix</location>
    </subcellularLocation>
</comment>
<comment type="induction">
    <text evidence="3">Expressed constitutively. Not induced by dark treatment or sucrose starvation.</text>
</comment>
<comment type="similarity">
    <text evidence="5">Belongs to the ETF alpha-subunit/FixB family.</text>
</comment>
<gene>
    <name type="primary">ETFA</name>
    <name type="ordered locus">At1g50940</name>
    <name type="ORF">F8A12.16</name>
</gene>
<accession>Q9C6I6</accession>
<feature type="transit peptide" description="Mitochondrion" evidence="4">
    <location>
        <begin position="1"/>
        <end position="24"/>
    </location>
</feature>
<feature type="chain" id="PRO_0000324177" description="Electron transfer flavoprotein subunit alpha, mitochondrial">
    <location>
        <begin position="25"/>
        <end position="363"/>
    </location>
</feature>
<feature type="binding site" evidence="1">
    <location>
        <begin position="303"/>
        <end position="331"/>
    </location>
    <ligand>
        <name>FAD</name>
        <dbReference type="ChEBI" id="CHEBI:57692"/>
    </ligand>
</feature>
<protein>
    <recommendedName>
        <fullName>Electron transfer flavoprotein subunit alpha, mitochondrial</fullName>
        <shortName>Alpha-ETF</shortName>
    </recommendedName>
</protein>
<evidence type="ECO:0000250" key="1"/>
<evidence type="ECO:0000269" key="2">
    <source>
    </source>
</evidence>
<evidence type="ECO:0000269" key="3">
    <source>
    </source>
</evidence>
<evidence type="ECO:0000269" key="4">
    <source>
    </source>
</evidence>
<evidence type="ECO:0000305" key="5"/>
<evidence type="ECO:0000305" key="6">
    <source>
    </source>
</evidence>
<keyword id="KW-0249">Electron transport</keyword>
<keyword id="KW-0274">FAD</keyword>
<keyword id="KW-0285">Flavoprotein</keyword>
<keyword id="KW-0496">Mitochondrion</keyword>
<keyword id="KW-1185">Reference proteome</keyword>
<keyword id="KW-0809">Transit peptide</keyword>
<keyword id="KW-0813">Transport</keyword>
<reference key="1">
    <citation type="journal article" date="2000" name="Nature">
        <title>Sequence and analysis of chromosome 1 of the plant Arabidopsis thaliana.</title>
        <authorList>
            <person name="Theologis A."/>
            <person name="Ecker J.R."/>
            <person name="Palm C.J."/>
            <person name="Federspiel N.A."/>
            <person name="Kaul S."/>
            <person name="White O."/>
            <person name="Alonso J."/>
            <person name="Altafi H."/>
            <person name="Araujo R."/>
            <person name="Bowman C.L."/>
            <person name="Brooks S.Y."/>
            <person name="Buehler E."/>
            <person name="Chan A."/>
            <person name="Chao Q."/>
            <person name="Chen H."/>
            <person name="Cheuk R.F."/>
            <person name="Chin C.W."/>
            <person name="Chung M.K."/>
            <person name="Conn L."/>
            <person name="Conway A.B."/>
            <person name="Conway A.R."/>
            <person name="Creasy T.H."/>
            <person name="Dewar K."/>
            <person name="Dunn P."/>
            <person name="Etgu P."/>
            <person name="Feldblyum T.V."/>
            <person name="Feng J.-D."/>
            <person name="Fong B."/>
            <person name="Fujii C.Y."/>
            <person name="Gill J.E."/>
            <person name="Goldsmith A.D."/>
            <person name="Haas B."/>
            <person name="Hansen N.F."/>
            <person name="Hughes B."/>
            <person name="Huizar L."/>
            <person name="Hunter J.L."/>
            <person name="Jenkins J."/>
            <person name="Johnson-Hopson C."/>
            <person name="Khan S."/>
            <person name="Khaykin E."/>
            <person name="Kim C.J."/>
            <person name="Koo H.L."/>
            <person name="Kremenetskaia I."/>
            <person name="Kurtz D.B."/>
            <person name="Kwan A."/>
            <person name="Lam B."/>
            <person name="Langin-Hooper S."/>
            <person name="Lee A."/>
            <person name="Lee J.M."/>
            <person name="Lenz C.A."/>
            <person name="Li J.H."/>
            <person name="Li Y.-P."/>
            <person name="Lin X."/>
            <person name="Liu S.X."/>
            <person name="Liu Z.A."/>
            <person name="Luros J.S."/>
            <person name="Maiti R."/>
            <person name="Marziali A."/>
            <person name="Militscher J."/>
            <person name="Miranda M."/>
            <person name="Nguyen M."/>
            <person name="Nierman W.C."/>
            <person name="Osborne B.I."/>
            <person name="Pai G."/>
            <person name="Peterson J."/>
            <person name="Pham P.K."/>
            <person name="Rizzo M."/>
            <person name="Rooney T."/>
            <person name="Rowley D."/>
            <person name="Sakano H."/>
            <person name="Salzberg S.L."/>
            <person name="Schwartz J.R."/>
            <person name="Shinn P."/>
            <person name="Southwick A.M."/>
            <person name="Sun H."/>
            <person name="Tallon L.J."/>
            <person name="Tambunga G."/>
            <person name="Toriumi M.J."/>
            <person name="Town C.D."/>
            <person name="Utterback T."/>
            <person name="Van Aken S."/>
            <person name="Vaysberg M."/>
            <person name="Vysotskaia V.S."/>
            <person name="Walker M."/>
            <person name="Wu D."/>
            <person name="Yu G."/>
            <person name="Fraser C.M."/>
            <person name="Venter J.C."/>
            <person name="Davis R.W."/>
        </authorList>
    </citation>
    <scope>NUCLEOTIDE SEQUENCE [LARGE SCALE GENOMIC DNA]</scope>
    <source>
        <strain>cv. Columbia</strain>
    </source>
</reference>
<reference key="2">
    <citation type="journal article" date="2017" name="Plant J.">
        <title>Araport11: a complete reannotation of the Arabidopsis thaliana reference genome.</title>
        <authorList>
            <person name="Cheng C.Y."/>
            <person name="Krishnakumar V."/>
            <person name="Chan A.P."/>
            <person name="Thibaud-Nissen F."/>
            <person name="Schobel S."/>
            <person name="Town C.D."/>
        </authorList>
    </citation>
    <scope>GENOME REANNOTATION</scope>
    <source>
        <strain>cv. Columbia</strain>
    </source>
</reference>
<reference key="3">
    <citation type="journal article" date="2003" name="Science">
        <title>Empirical analysis of transcriptional activity in the Arabidopsis genome.</title>
        <authorList>
            <person name="Yamada K."/>
            <person name="Lim J."/>
            <person name="Dale J.M."/>
            <person name="Chen H."/>
            <person name="Shinn P."/>
            <person name="Palm C.J."/>
            <person name="Southwick A.M."/>
            <person name="Wu H.C."/>
            <person name="Kim C.J."/>
            <person name="Nguyen M."/>
            <person name="Pham P.K."/>
            <person name="Cheuk R.F."/>
            <person name="Karlin-Newmann G."/>
            <person name="Liu S.X."/>
            <person name="Lam B."/>
            <person name="Sakano H."/>
            <person name="Wu T."/>
            <person name="Yu G."/>
            <person name="Miranda M."/>
            <person name="Quach H.L."/>
            <person name="Tripp M."/>
            <person name="Chang C.H."/>
            <person name="Lee J.M."/>
            <person name="Toriumi M.J."/>
            <person name="Chan M.M."/>
            <person name="Tang C.C."/>
            <person name="Onodera C.S."/>
            <person name="Deng J.M."/>
            <person name="Akiyama K."/>
            <person name="Ansari Y."/>
            <person name="Arakawa T."/>
            <person name="Banh J."/>
            <person name="Banno F."/>
            <person name="Bowser L."/>
            <person name="Brooks S.Y."/>
            <person name="Carninci P."/>
            <person name="Chao Q."/>
            <person name="Choy N."/>
            <person name="Enju A."/>
            <person name="Goldsmith A.D."/>
            <person name="Gurjal M."/>
            <person name="Hansen N.F."/>
            <person name="Hayashizaki Y."/>
            <person name="Johnson-Hopson C."/>
            <person name="Hsuan V.W."/>
            <person name="Iida K."/>
            <person name="Karnes M."/>
            <person name="Khan S."/>
            <person name="Koesema E."/>
            <person name="Ishida J."/>
            <person name="Jiang P.X."/>
            <person name="Jones T."/>
            <person name="Kawai J."/>
            <person name="Kamiya A."/>
            <person name="Meyers C."/>
            <person name="Nakajima M."/>
            <person name="Narusaka M."/>
            <person name="Seki M."/>
            <person name="Sakurai T."/>
            <person name="Satou M."/>
            <person name="Tamse R."/>
            <person name="Vaysberg M."/>
            <person name="Wallender E.K."/>
            <person name="Wong C."/>
            <person name="Yamamura Y."/>
            <person name="Yuan S."/>
            <person name="Shinozaki K."/>
            <person name="Davis R.W."/>
            <person name="Theologis A."/>
            <person name="Ecker J.R."/>
        </authorList>
    </citation>
    <scope>NUCLEOTIDE SEQUENCE [LARGE SCALE MRNA]</scope>
    <source>
        <strain>cv. Columbia</strain>
    </source>
</reference>
<reference key="4">
    <citation type="journal article" date="2002" name="Science">
        <title>Functional annotation of a full-length Arabidopsis cDNA collection.</title>
        <authorList>
            <person name="Seki M."/>
            <person name="Narusaka M."/>
            <person name="Kamiya A."/>
            <person name="Ishida J."/>
            <person name="Satou M."/>
            <person name="Sakurai T."/>
            <person name="Nakajima M."/>
            <person name="Enju A."/>
            <person name="Akiyama K."/>
            <person name="Oono Y."/>
            <person name="Muramatsu M."/>
            <person name="Hayashizaki Y."/>
            <person name="Kawai J."/>
            <person name="Carninci P."/>
            <person name="Itoh M."/>
            <person name="Ishii Y."/>
            <person name="Arakawa T."/>
            <person name="Shibata K."/>
            <person name="Shinagawa A."/>
            <person name="Shinozaki K."/>
        </authorList>
    </citation>
    <scope>NUCLEOTIDE SEQUENCE [LARGE SCALE MRNA]</scope>
    <source>
        <strain>cv. Columbia</strain>
    </source>
</reference>
<reference key="5">
    <citation type="journal article" date="2004" name="Plant Cell">
        <title>Experimental analysis of the Arabidopsis mitochondrial proteome highlights signaling and regulatory components, provides assessment of targeting prediction programs, and indicates plant-specific mitochondrial proteins.</title>
        <authorList>
            <person name="Heazlewood J.L."/>
            <person name="Tonti-Filippini J.S."/>
            <person name="Gout A.M."/>
            <person name="Day D.A."/>
            <person name="Whelan J."/>
            <person name="Millar A.H."/>
        </authorList>
    </citation>
    <scope>IDENTIFICATION BY MASS SPECTROMETRY</scope>
    <scope>SUBCELLULAR LOCATION [LARGE SCALE ANALYSIS]</scope>
    <source>
        <strain>cv. Landsberg erecta</strain>
    </source>
</reference>
<reference key="6">
    <citation type="journal article" date="2006" name="Plant J.">
        <title>The mitochondrial electron transfer flavoprotein complex is essential for survival of Arabidopsis in extended darkness.</title>
        <authorList>
            <person name="Ishizaki K."/>
            <person name="Schauer N."/>
            <person name="Larson T.R."/>
            <person name="Graham I.A."/>
            <person name="Fernie A.R."/>
            <person name="Leaver C.J."/>
        </authorList>
    </citation>
    <scope>INDUCTION</scope>
    <scope>INTERACTION WITH ETFB</scope>
</reference>
<reference key="7">
    <citation type="journal article" date="2015" name="J. Exp. Bot.">
        <title>Identification of cleavage sites and substrate proteins for two mitochondrial intermediate peptidases in Arabidopsis thaliana.</title>
        <authorList>
            <person name="Carrie C."/>
            <person name="Venne A.S."/>
            <person name="Zahedi R.P."/>
            <person name="Soll J."/>
        </authorList>
    </citation>
    <scope>IDENTIFICATION BY MASS SPECTROMETRY</scope>
    <scope>CLEAVAGE OF TRANSIT PEPTIDE AFTER ILE-24</scope>
</reference>
<proteinExistence type="evidence at protein level"/>
<name>ETFA_ARATH</name>
<sequence>MTRTVLLRALTKNKFVASNAPRSISISITSLSRCISTLILAEHESGTIKPQTVSTVVAANSLGESSSISLLLAGSGSSLQEAASQAASCHPSVSEVLVADSDKFEYSLAEPWAKLVDFVRQQGDYSHILASSSSFGKNILPRVAALLDVSPITDVVKILGSDQFIRPIYAGNALCTVRYTGAGPCMLTIRSTSFPVTPITANSESKKATVSQIDLSNFEDDSVSKSRYVGRSTQDTERPDLGSARVVITGGRALKSVENFKMIEKLAEKLGGAVGATRAAVDAGYVPNDLQVGQTGKIVAPELYMAFGVSGAIQHLAGIKDSKVIVAVNKDADAPIFQVADYGLVGDLFEVIPELLEKLPEKK</sequence>
<dbReference type="EMBL" id="AC079284">
    <property type="protein sequence ID" value="AAG50941.1"/>
    <property type="molecule type" value="Genomic_DNA"/>
</dbReference>
<dbReference type="EMBL" id="CP002684">
    <property type="protein sequence ID" value="AEE32603.1"/>
    <property type="molecule type" value="Genomic_DNA"/>
</dbReference>
<dbReference type="EMBL" id="BT004989">
    <property type="protein sequence ID" value="AAO50522.1"/>
    <property type="molecule type" value="mRNA"/>
</dbReference>
<dbReference type="EMBL" id="AK117515">
    <property type="protein sequence ID" value="BAC42178.1"/>
    <property type="molecule type" value="mRNA"/>
</dbReference>
<dbReference type="PIR" id="E96546">
    <property type="entry name" value="E96546"/>
</dbReference>
<dbReference type="SMR" id="Q9C6I6"/>
<dbReference type="BioGRID" id="26741">
    <property type="interactions" value="1"/>
</dbReference>
<dbReference type="FunCoup" id="Q9C6I6">
    <property type="interactions" value="2722"/>
</dbReference>
<dbReference type="IntAct" id="Q9C6I6">
    <property type="interactions" value="2"/>
</dbReference>
<dbReference type="STRING" id="3702.Q9C6I6"/>
<dbReference type="PaxDb" id="3702-AT1G50940.1"/>
<dbReference type="ProteomicsDB" id="220653"/>
<dbReference type="EnsemblPlants" id="AT1G50940.1">
    <property type="protein sequence ID" value="AT1G50940.1"/>
    <property type="gene ID" value="AT1G50940"/>
</dbReference>
<dbReference type="GeneID" id="841516"/>
<dbReference type="Gramene" id="AT1G50940.1">
    <property type="protein sequence ID" value="AT1G50940.1"/>
    <property type="gene ID" value="AT1G50940"/>
</dbReference>
<dbReference type="KEGG" id="ath:AT1G50940"/>
<dbReference type="Araport" id="AT1G50940"/>
<dbReference type="TAIR" id="AT1G50940">
    <property type="gene designation" value="ETFALPHA"/>
</dbReference>
<dbReference type="eggNOG" id="KOG3954">
    <property type="taxonomic scope" value="Eukaryota"/>
</dbReference>
<dbReference type="HOGENOM" id="CLU_034178_0_1_1"/>
<dbReference type="InParanoid" id="Q9C6I6"/>
<dbReference type="OMA" id="HHICGIG"/>
<dbReference type="OrthoDB" id="1715808at2759"/>
<dbReference type="PhylomeDB" id="Q9C6I6"/>
<dbReference type="CD-CODE" id="4299E36E">
    <property type="entry name" value="Nucleolus"/>
</dbReference>
<dbReference type="PRO" id="PR:Q9C6I6"/>
<dbReference type="Proteomes" id="UP000006548">
    <property type="component" value="Chromosome 1"/>
</dbReference>
<dbReference type="ExpressionAtlas" id="Q9C6I6">
    <property type="expression patterns" value="baseline and differential"/>
</dbReference>
<dbReference type="GO" id="GO:0005759">
    <property type="term" value="C:mitochondrial matrix"/>
    <property type="evidence" value="ECO:0007669"/>
    <property type="project" value="UniProtKB-SubCell"/>
</dbReference>
<dbReference type="GO" id="GO:0005739">
    <property type="term" value="C:mitochondrion"/>
    <property type="evidence" value="ECO:0000314"/>
    <property type="project" value="TAIR"/>
</dbReference>
<dbReference type="GO" id="GO:0005634">
    <property type="term" value="C:nucleus"/>
    <property type="evidence" value="ECO:0007005"/>
    <property type="project" value="TAIR"/>
</dbReference>
<dbReference type="GO" id="GO:0005507">
    <property type="term" value="F:copper ion binding"/>
    <property type="evidence" value="ECO:0007005"/>
    <property type="project" value="TAIR"/>
</dbReference>
<dbReference type="GO" id="GO:0009055">
    <property type="term" value="F:electron transfer activity"/>
    <property type="evidence" value="ECO:0007669"/>
    <property type="project" value="InterPro"/>
</dbReference>
<dbReference type="GO" id="GO:0050660">
    <property type="term" value="F:flavin adenine dinucleotide binding"/>
    <property type="evidence" value="ECO:0007669"/>
    <property type="project" value="InterPro"/>
</dbReference>
<dbReference type="CDD" id="cd01715">
    <property type="entry name" value="ETF_alpha"/>
    <property type="match status" value="1"/>
</dbReference>
<dbReference type="FunFam" id="3.40.50.620:FF:000157">
    <property type="entry name" value="Electron transfer flavoprotein subunit alpha, mitochondrial"/>
    <property type="match status" value="1"/>
</dbReference>
<dbReference type="FunFam" id="3.40.50.1220:FF:000001">
    <property type="entry name" value="Electron transfer flavoprotein, alpha subunit"/>
    <property type="match status" value="1"/>
</dbReference>
<dbReference type="Gene3D" id="3.40.50.620">
    <property type="entry name" value="HUPs"/>
    <property type="match status" value="1"/>
</dbReference>
<dbReference type="Gene3D" id="3.40.50.1220">
    <property type="entry name" value="TPP-binding domain"/>
    <property type="match status" value="1"/>
</dbReference>
<dbReference type="InterPro" id="IPR029035">
    <property type="entry name" value="DHS-like_NAD/FAD-binding_dom"/>
</dbReference>
<dbReference type="InterPro" id="IPR014730">
    <property type="entry name" value="ETF_a/b_N"/>
</dbReference>
<dbReference type="InterPro" id="IPR001308">
    <property type="entry name" value="ETF_a/FixB"/>
</dbReference>
<dbReference type="InterPro" id="IPR033947">
    <property type="entry name" value="ETF_alpha_N"/>
</dbReference>
<dbReference type="InterPro" id="IPR014731">
    <property type="entry name" value="ETF_asu_C"/>
</dbReference>
<dbReference type="InterPro" id="IPR018206">
    <property type="entry name" value="ETF_asu_C_CS"/>
</dbReference>
<dbReference type="InterPro" id="IPR014729">
    <property type="entry name" value="Rossmann-like_a/b/a_fold"/>
</dbReference>
<dbReference type="PANTHER" id="PTHR43153">
    <property type="entry name" value="ELECTRON TRANSFER FLAVOPROTEIN ALPHA"/>
    <property type="match status" value="1"/>
</dbReference>
<dbReference type="PANTHER" id="PTHR43153:SF1">
    <property type="entry name" value="ELECTRON TRANSFER FLAVOPROTEIN SUBUNIT ALPHA, MITOCHONDRIAL"/>
    <property type="match status" value="1"/>
</dbReference>
<dbReference type="Pfam" id="PF01012">
    <property type="entry name" value="ETF"/>
    <property type="match status" value="1"/>
</dbReference>
<dbReference type="Pfam" id="PF00766">
    <property type="entry name" value="ETF_alpha"/>
    <property type="match status" value="1"/>
</dbReference>
<dbReference type="PIRSF" id="PIRSF000089">
    <property type="entry name" value="Electra_flavoP_a"/>
    <property type="match status" value="1"/>
</dbReference>
<dbReference type="SMART" id="SM00893">
    <property type="entry name" value="ETF"/>
    <property type="match status" value="1"/>
</dbReference>
<dbReference type="SUPFAM" id="SSF52402">
    <property type="entry name" value="Adenine nucleotide alpha hydrolases-like"/>
    <property type="match status" value="1"/>
</dbReference>
<dbReference type="SUPFAM" id="SSF52467">
    <property type="entry name" value="DHS-like NAD/FAD-binding domain"/>
    <property type="match status" value="1"/>
</dbReference>
<dbReference type="PROSITE" id="PS00696">
    <property type="entry name" value="ETF_ALPHA"/>
    <property type="match status" value="1"/>
</dbReference>
<organism>
    <name type="scientific">Arabidopsis thaliana</name>
    <name type="common">Mouse-ear cress</name>
    <dbReference type="NCBI Taxonomy" id="3702"/>
    <lineage>
        <taxon>Eukaryota</taxon>
        <taxon>Viridiplantae</taxon>
        <taxon>Streptophyta</taxon>
        <taxon>Embryophyta</taxon>
        <taxon>Tracheophyta</taxon>
        <taxon>Spermatophyta</taxon>
        <taxon>Magnoliopsida</taxon>
        <taxon>eudicotyledons</taxon>
        <taxon>Gunneridae</taxon>
        <taxon>Pentapetalae</taxon>
        <taxon>rosids</taxon>
        <taxon>malvids</taxon>
        <taxon>Brassicales</taxon>
        <taxon>Brassicaceae</taxon>
        <taxon>Camelineae</taxon>
        <taxon>Arabidopsis</taxon>
    </lineage>
</organism>